<sequence length="477" mass="52944">MSPQTETKASVGFKAGVKEYKLTYYTPEYQTKDTDILAAFRVTPQPGVPPEEAGAAVAAESSTGTWTTVWTDGLTSLDRYKGRCYRIERVVGEKDQYIAYVAYPLDLFEEGSVTNMLTSIVGNVFGFKALRALRLEDLRIPVAYVKTFQGPPHGIQVERDKLNKYGRPLLGCTIKPKLGLSAKNYGRAVYECLRGGLDFTKDDENVNSQPFMRWRDRFLFCAEALFKAQAETGEIKGHYLNATAGTCEEMMKRAVFARELGTPIVMHDYLTGGFTANTTLAHYCRDNGLLLHIHRAMHAVIDRQKNHGMHFRVLAKALRMSGGDHIHSGTVVGKLEGERDITLGFVDLLRDDFIEQDRSRGIYFTQDWVSLPGVLPVASGGIHVWHMPALTEIFGDDSVLQFGGGTLGHPWGNAPGAVANRVALEACVKARNEGRDLAREGNEIIREAAKWSPELAAACEVWKEIVFNFAAMDVLDK</sequence>
<comment type="function">
    <text>RuBisCO catalyzes two reactions: the carboxylation of D-ribulose 1,5-bisphosphate, the primary event in carbon dioxide fixation, as well as the oxidative fragmentation of the pentose substrate in the photorespiration process. Both reactions occur simultaneously and in competition at the same active site.</text>
</comment>
<comment type="catalytic activity">
    <reaction>
        <text>2 (2R)-3-phosphoglycerate + 2 H(+) = D-ribulose 1,5-bisphosphate + CO2 + H2O</text>
        <dbReference type="Rhea" id="RHEA:23124"/>
        <dbReference type="ChEBI" id="CHEBI:15377"/>
        <dbReference type="ChEBI" id="CHEBI:15378"/>
        <dbReference type="ChEBI" id="CHEBI:16526"/>
        <dbReference type="ChEBI" id="CHEBI:57870"/>
        <dbReference type="ChEBI" id="CHEBI:58272"/>
        <dbReference type="EC" id="4.1.1.39"/>
    </reaction>
</comment>
<comment type="catalytic activity">
    <reaction>
        <text>D-ribulose 1,5-bisphosphate + O2 = 2-phosphoglycolate + (2R)-3-phosphoglycerate + 2 H(+)</text>
        <dbReference type="Rhea" id="RHEA:36631"/>
        <dbReference type="ChEBI" id="CHEBI:15378"/>
        <dbReference type="ChEBI" id="CHEBI:15379"/>
        <dbReference type="ChEBI" id="CHEBI:57870"/>
        <dbReference type="ChEBI" id="CHEBI:58033"/>
        <dbReference type="ChEBI" id="CHEBI:58272"/>
    </reaction>
</comment>
<comment type="cofactor">
    <cofactor evidence="1">
        <name>Mg(2+)</name>
        <dbReference type="ChEBI" id="CHEBI:18420"/>
    </cofactor>
    <text evidence="1">Binds 1 Mg(2+) ion per subunit.</text>
</comment>
<comment type="subunit">
    <text evidence="1">Heterohexadecamer of 8 large chains and 8 small chains; disulfide-linked. The disulfide link is formed within the large subunit homodimers (By similarity).</text>
</comment>
<comment type="subcellular location">
    <subcellularLocation>
        <location>Plastid</location>
        <location>Chloroplast</location>
    </subcellularLocation>
</comment>
<comment type="PTM">
    <text evidence="1">The disulfide bond which can form in the large chain dimeric partners within the hexadecamer appears to be associated with oxidative stress and protein turnover.</text>
</comment>
<comment type="miscellaneous">
    <text evidence="1">The basic functional RuBisCO is composed of a large chain homodimer in a 'head-to-tail' conformation. In form I RuBisCO this homodimer is arranged in a barrel-like tetramer with the small subunits forming a tetrameric 'cap' on each end of the 'barrel' (By similarity).</text>
</comment>
<comment type="similarity">
    <text evidence="3">Belongs to the RuBisCO large chain family. Type I subfamily.</text>
</comment>
<gene>
    <name type="primary">rbcL</name>
</gene>
<accession>P25079</accession>
<accession>Q27S42</accession>
<accession>Q2VEG9</accession>
<name>RBL_SOLTU</name>
<evidence type="ECO:0000250" key="1"/>
<evidence type="ECO:0000269" key="2">
    <source>
    </source>
</evidence>
<evidence type="ECO:0000305" key="3"/>
<feature type="propeptide" id="PRO_0000031409" evidence="2">
    <location>
        <begin position="1"/>
        <end position="2"/>
    </location>
</feature>
<feature type="chain" id="PRO_0000031410" description="Ribulose bisphosphate carboxylase large chain">
    <location>
        <begin position="3"/>
        <end position="477"/>
    </location>
</feature>
<feature type="active site" description="Proton acceptor" evidence="1">
    <location>
        <position position="175"/>
    </location>
</feature>
<feature type="active site" description="Proton acceptor" evidence="1">
    <location>
        <position position="294"/>
    </location>
</feature>
<feature type="binding site" description="in homodimeric partner" evidence="1">
    <location>
        <position position="123"/>
    </location>
    <ligand>
        <name>substrate</name>
    </ligand>
</feature>
<feature type="binding site" evidence="1">
    <location>
        <position position="173"/>
    </location>
    <ligand>
        <name>substrate</name>
    </ligand>
</feature>
<feature type="binding site" evidence="1">
    <location>
        <position position="177"/>
    </location>
    <ligand>
        <name>substrate</name>
    </ligand>
</feature>
<feature type="binding site" description="via carbamate group" evidence="1">
    <location>
        <position position="201"/>
    </location>
    <ligand>
        <name>Mg(2+)</name>
        <dbReference type="ChEBI" id="CHEBI:18420"/>
    </ligand>
</feature>
<feature type="binding site" evidence="1">
    <location>
        <position position="203"/>
    </location>
    <ligand>
        <name>Mg(2+)</name>
        <dbReference type="ChEBI" id="CHEBI:18420"/>
    </ligand>
</feature>
<feature type="binding site" evidence="1">
    <location>
        <position position="204"/>
    </location>
    <ligand>
        <name>Mg(2+)</name>
        <dbReference type="ChEBI" id="CHEBI:18420"/>
    </ligand>
</feature>
<feature type="binding site" evidence="1">
    <location>
        <position position="295"/>
    </location>
    <ligand>
        <name>substrate</name>
    </ligand>
</feature>
<feature type="binding site" evidence="1">
    <location>
        <position position="327"/>
    </location>
    <ligand>
        <name>substrate</name>
    </ligand>
</feature>
<feature type="binding site" evidence="1">
    <location>
        <position position="379"/>
    </location>
    <ligand>
        <name>substrate</name>
    </ligand>
</feature>
<feature type="site" description="Transition state stabilizer" evidence="1">
    <location>
        <position position="334"/>
    </location>
</feature>
<feature type="modified residue" description="N-acetylproline" evidence="2">
    <location>
        <position position="3"/>
    </location>
</feature>
<feature type="modified residue" description="N6,N6,N6-trimethyllysine" evidence="2">
    <location>
        <position position="14"/>
    </location>
</feature>
<feature type="modified residue" description="N6-carboxylysine" evidence="1">
    <location>
        <position position="201"/>
    </location>
</feature>
<feature type="disulfide bond" description="Interchain; in linked form" evidence="1">
    <location>
        <position position="247"/>
    </location>
</feature>
<feature type="sequence conflict" description="In Ref. 1; AAB01597." evidence="3" ref="1">
    <original>T</original>
    <variation>P</variation>
    <location>
        <position position="26"/>
    </location>
</feature>
<feature type="sequence conflict" description="In Ref. 1; AAB01597." evidence="3" ref="1">
    <original>R</original>
    <variation>S</variation>
    <location>
        <position position="83"/>
    </location>
</feature>
<feature type="sequence conflict" description="In Ref. 1; AAB01597." evidence="3" ref="1">
    <original>R</original>
    <variation>L</variation>
    <location>
        <position position="217"/>
    </location>
</feature>
<feature type="sequence conflict" description="In Ref. 1; AAB01597." evidence="3" ref="1">
    <original>F</original>
    <variation>Y</variation>
    <location>
        <position position="226"/>
    </location>
</feature>
<feature type="sequence conflict" description="In Ref. 1; AAB01597." evidence="3" ref="1">
    <original>T</original>
    <variation>V</variation>
    <location>
        <position position="262"/>
    </location>
</feature>
<feature type="sequence conflict" description="In Ref. 1; AAB01597." evidence="3" ref="1">
    <original>G</original>
    <variation>A</variation>
    <location>
        <position position="273"/>
    </location>
</feature>
<feature type="sequence conflict" description="In Ref. 1; AAB01597." evidence="3" ref="1">
    <original>N</original>
    <variation>S</variation>
    <location>
        <position position="306"/>
    </location>
</feature>
<feature type="sequence conflict" description="In Ref. 1; AAB01597." evidence="3" ref="1">
    <original>V</original>
    <variation>E</variation>
    <location>
        <position position="377"/>
    </location>
</feature>
<feature type="sequence conflict" description="In Ref. 1; AAB01597." evidence="3" ref="1">
    <original>A</original>
    <variation>C</variation>
    <location>
        <position position="449"/>
    </location>
</feature>
<geneLocation type="chloroplast"/>
<proteinExistence type="evidence at protein level"/>
<dbReference type="EC" id="4.1.1.39"/>
<dbReference type="EMBL" id="M76402">
    <property type="protein sequence ID" value="AAB01597.1"/>
    <property type="molecule type" value="Genomic_DNA"/>
</dbReference>
<dbReference type="EMBL" id="DQ231562">
    <property type="protein sequence ID" value="ABB90049.1"/>
    <property type="molecule type" value="Genomic_DNA"/>
</dbReference>
<dbReference type="EMBL" id="DQ386163">
    <property type="protein sequence ID" value="ABD47065.1"/>
    <property type="molecule type" value="Genomic_DNA"/>
</dbReference>
<dbReference type="PIR" id="PQ0797">
    <property type="entry name" value="PQ0797"/>
</dbReference>
<dbReference type="RefSeq" id="YP_635647.1">
    <property type="nucleotide sequence ID" value="NC_008096.2"/>
</dbReference>
<dbReference type="SMR" id="P25079"/>
<dbReference type="FunCoup" id="P25079">
    <property type="interactions" value="482"/>
</dbReference>
<dbReference type="STRING" id="4113.P25079"/>
<dbReference type="iPTMnet" id="P25079"/>
<dbReference type="PaxDb" id="4113-PGSC0003DMT400083063"/>
<dbReference type="GeneID" id="4099985"/>
<dbReference type="KEGG" id="sot:4099985"/>
<dbReference type="eggNOG" id="ENOG502QTI9">
    <property type="taxonomic scope" value="Eukaryota"/>
</dbReference>
<dbReference type="InParanoid" id="P25079"/>
<dbReference type="OrthoDB" id="1578724at2759"/>
<dbReference type="Proteomes" id="UP000011115">
    <property type="component" value="Unassembled WGS sequence"/>
</dbReference>
<dbReference type="ExpressionAtlas" id="P25079">
    <property type="expression patterns" value="baseline"/>
</dbReference>
<dbReference type="GO" id="GO:0009507">
    <property type="term" value="C:chloroplast"/>
    <property type="evidence" value="ECO:0007669"/>
    <property type="project" value="UniProtKB-SubCell"/>
</dbReference>
<dbReference type="GO" id="GO:0000287">
    <property type="term" value="F:magnesium ion binding"/>
    <property type="evidence" value="ECO:0007669"/>
    <property type="project" value="UniProtKB-UniRule"/>
</dbReference>
<dbReference type="GO" id="GO:0004497">
    <property type="term" value="F:monooxygenase activity"/>
    <property type="evidence" value="ECO:0007669"/>
    <property type="project" value="UniProtKB-KW"/>
</dbReference>
<dbReference type="GO" id="GO:0016984">
    <property type="term" value="F:ribulose-bisphosphate carboxylase activity"/>
    <property type="evidence" value="ECO:0007669"/>
    <property type="project" value="UniProtKB-UniRule"/>
</dbReference>
<dbReference type="GO" id="GO:0009853">
    <property type="term" value="P:photorespiration"/>
    <property type="evidence" value="ECO:0007669"/>
    <property type="project" value="UniProtKB-KW"/>
</dbReference>
<dbReference type="GO" id="GO:0019253">
    <property type="term" value="P:reductive pentose-phosphate cycle"/>
    <property type="evidence" value="ECO:0007669"/>
    <property type="project" value="UniProtKB-UniRule"/>
</dbReference>
<dbReference type="CDD" id="cd08212">
    <property type="entry name" value="RuBisCO_large_I"/>
    <property type="match status" value="1"/>
</dbReference>
<dbReference type="FunFam" id="3.20.20.110:FF:000001">
    <property type="entry name" value="Ribulose bisphosphate carboxylase large chain"/>
    <property type="match status" value="1"/>
</dbReference>
<dbReference type="FunFam" id="3.30.70.150:FF:000001">
    <property type="entry name" value="Ribulose bisphosphate carboxylase large chain"/>
    <property type="match status" value="1"/>
</dbReference>
<dbReference type="Gene3D" id="3.20.20.110">
    <property type="entry name" value="Ribulose bisphosphate carboxylase, large subunit, C-terminal domain"/>
    <property type="match status" value="1"/>
</dbReference>
<dbReference type="Gene3D" id="3.30.70.150">
    <property type="entry name" value="RuBisCO large subunit, N-terminal domain"/>
    <property type="match status" value="1"/>
</dbReference>
<dbReference type="HAMAP" id="MF_01338">
    <property type="entry name" value="RuBisCO_L_type1"/>
    <property type="match status" value="1"/>
</dbReference>
<dbReference type="InterPro" id="IPR033966">
    <property type="entry name" value="RuBisCO"/>
</dbReference>
<dbReference type="InterPro" id="IPR020878">
    <property type="entry name" value="RuBisCo_large_chain_AS"/>
</dbReference>
<dbReference type="InterPro" id="IPR000685">
    <property type="entry name" value="RuBisCO_lsu_C"/>
</dbReference>
<dbReference type="InterPro" id="IPR036376">
    <property type="entry name" value="RuBisCO_lsu_C_sf"/>
</dbReference>
<dbReference type="InterPro" id="IPR017443">
    <property type="entry name" value="RuBisCO_lsu_fd_N"/>
</dbReference>
<dbReference type="InterPro" id="IPR036422">
    <property type="entry name" value="RuBisCO_lsu_N_sf"/>
</dbReference>
<dbReference type="InterPro" id="IPR020888">
    <property type="entry name" value="RuBisCO_lsuI"/>
</dbReference>
<dbReference type="NCBIfam" id="NF003252">
    <property type="entry name" value="PRK04208.1"/>
    <property type="match status" value="1"/>
</dbReference>
<dbReference type="PANTHER" id="PTHR42704">
    <property type="entry name" value="RIBULOSE BISPHOSPHATE CARBOXYLASE"/>
    <property type="match status" value="1"/>
</dbReference>
<dbReference type="PANTHER" id="PTHR42704:SF16">
    <property type="entry name" value="RIBULOSE BISPHOSPHATE CARBOXYLASE LARGE CHAIN"/>
    <property type="match status" value="1"/>
</dbReference>
<dbReference type="Pfam" id="PF00016">
    <property type="entry name" value="RuBisCO_large"/>
    <property type="match status" value="1"/>
</dbReference>
<dbReference type="Pfam" id="PF02788">
    <property type="entry name" value="RuBisCO_large_N"/>
    <property type="match status" value="1"/>
</dbReference>
<dbReference type="SFLD" id="SFLDG01052">
    <property type="entry name" value="RuBisCO"/>
    <property type="match status" value="1"/>
</dbReference>
<dbReference type="SFLD" id="SFLDS00014">
    <property type="entry name" value="RuBisCO"/>
    <property type="match status" value="1"/>
</dbReference>
<dbReference type="SFLD" id="SFLDG00301">
    <property type="entry name" value="RuBisCO-like_proteins"/>
    <property type="match status" value="1"/>
</dbReference>
<dbReference type="SUPFAM" id="SSF51649">
    <property type="entry name" value="RuBisCo, C-terminal domain"/>
    <property type="match status" value="1"/>
</dbReference>
<dbReference type="SUPFAM" id="SSF54966">
    <property type="entry name" value="RuBisCO, large subunit, small (N-terminal) domain"/>
    <property type="match status" value="1"/>
</dbReference>
<dbReference type="PROSITE" id="PS00157">
    <property type="entry name" value="RUBISCO_LARGE"/>
    <property type="match status" value="1"/>
</dbReference>
<keyword id="KW-0007">Acetylation</keyword>
<keyword id="KW-0113">Calvin cycle</keyword>
<keyword id="KW-0120">Carbon dioxide fixation</keyword>
<keyword id="KW-0150">Chloroplast</keyword>
<keyword id="KW-0903">Direct protein sequencing</keyword>
<keyword id="KW-1015">Disulfide bond</keyword>
<keyword id="KW-0456">Lyase</keyword>
<keyword id="KW-0460">Magnesium</keyword>
<keyword id="KW-0479">Metal-binding</keyword>
<keyword id="KW-0488">Methylation</keyword>
<keyword id="KW-0503">Monooxygenase</keyword>
<keyword id="KW-0560">Oxidoreductase</keyword>
<keyword id="KW-0601">Photorespiration</keyword>
<keyword id="KW-0602">Photosynthesis</keyword>
<keyword id="KW-0934">Plastid</keyword>
<keyword id="KW-1185">Reference proteome</keyword>
<protein>
    <recommendedName>
        <fullName>Ribulose bisphosphate carboxylase large chain</fullName>
        <shortName>RuBisCO large subunit</shortName>
        <ecNumber>4.1.1.39</ecNumber>
    </recommendedName>
</protein>
<reference key="1">
    <citation type="journal article" date="1992" name="Plant Physiol.">
        <title>Comparison of the rbcL gene sequence of two potato cultivars with differential sensitivity to ozone.</title>
        <authorList>
            <person name="Enyedi A.J."/>
            <person name="Pell E.J."/>
        </authorList>
    </citation>
    <scope>NUCLEOTIDE SEQUENCE [GENOMIC DNA]</scope>
</reference>
<reference key="2">
    <citation type="journal article" date="2006" name="Plant Cell Rep.">
        <title>The complete chloroplast genome sequences of Solanum tuberosum and comparative analysis with Solanaceae species identified the presence of a 241-bp deletion in cultivated potato chloroplast DNA sequence.</title>
        <authorList>
            <person name="Chung H.-J."/>
            <person name="Jung J.D."/>
            <person name="Park H.-W."/>
            <person name="Kim J.-H."/>
            <person name="Cha H.W."/>
            <person name="Min S.R."/>
            <person name="Jeong W.-J."/>
            <person name="Liu J.R."/>
        </authorList>
    </citation>
    <scope>NUCLEOTIDE SEQUENCE [LARGE SCALE GENOMIC DNA]</scope>
    <source>
        <strain>cv. Desiree</strain>
    </source>
</reference>
<reference key="3">
    <citation type="submission" date="2006-02" db="EMBL/GenBank/DDBJ databases">
        <title>Complete chloroplast genome sequences of Solanum tuberosum cultivar Desiree and comparative analyses with other Solanaceae genomes.</title>
        <authorList>
            <person name="Gargano D."/>
            <person name="Scotti N."/>
            <person name="Vezzi A."/>
            <person name="Bilardi A."/>
            <person name="Valle G."/>
            <person name="Grillo S."/>
            <person name="Cardi T."/>
        </authorList>
    </citation>
    <scope>NUCLEOTIDE SEQUENCE [LARGE SCALE GENOMIC DNA]</scope>
    <source>
        <strain>cv. Desiree</strain>
    </source>
</reference>
<reference key="4">
    <citation type="journal article" date="1992" name="Plant Physiol.">
        <title>Posttranslational modifications in the amino-terminal region of the large subunit of ribulose-1,5-bisphosphate carboxylase/oxygenase from several plant species.</title>
        <authorList>
            <person name="Houtz R.L."/>
            <person name="Poneleit L."/>
            <person name="Jones S.B."/>
            <person name="Royer M."/>
            <person name="Stults J.T."/>
        </authorList>
    </citation>
    <scope>PROTEIN SEQUENCE OF 3-18</scope>
    <scope>METHYLATION AT LYS-14</scope>
    <scope>ACETYLATION AT PRO-3</scope>
</reference>
<organism>
    <name type="scientific">Solanum tuberosum</name>
    <name type="common">Potato</name>
    <dbReference type="NCBI Taxonomy" id="4113"/>
    <lineage>
        <taxon>Eukaryota</taxon>
        <taxon>Viridiplantae</taxon>
        <taxon>Streptophyta</taxon>
        <taxon>Embryophyta</taxon>
        <taxon>Tracheophyta</taxon>
        <taxon>Spermatophyta</taxon>
        <taxon>Magnoliopsida</taxon>
        <taxon>eudicotyledons</taxon>
        <taxon>Gunneridae</taxon>
        <taxon>Pentapetalae</taxon>
        <taxon>asterids</taxon>
        <taxon>lamiids</taxon>
        <taxon>Solanales</taxon>
        <taxon>Solanaceae</taxon>
        <taxon>Solanoideae</taxon>
        <taxon>Solaneae</taxon>
        <taxon>Solanum</taxon>
    </lineage>
</organism>